<comment type="function">
    <text>Does not have a catalytic activity.</text>
</comment>
<comment type="subcellular location">
    <subcellularLocation>
        <location evidence="4">Secreted</location>
    </subcellularLocation>
</comment>
<comment type="similarity">
    <text evidence="4">Belongs to the alpha-carbonic anhydrase family.</text>
</comment>
<evidence type="ECO:0000255" key="1"/>
<evidence type="ECO:0000255" key="2">
    <source>
        <dbReference type="PROSITE-ProRule" id="PRU01134"/>
    </source>
</evidence>
<evidence type="ECO:0000256" key="3">
    <source>
        <dbReference type="SAM" id="MobiDB-lite"/>
    </source>
</evidence>
<evidence type="ECO:0000305" key="4"/>
<proteinExistence type="evidence at transcript level"/>
<dbReference type="EMBL" id="Y07785">
    <property type="protein sequence ID" value="CAA69107.1"/>
    <property type="molecule type" value="mRNA"/>
</dbReference>
<dbReference type="RefSeq" id="NP_001009408.1">
    <property type="nucleotide sequence ID" value="NM_001009408.2"/>
</dbReference>
<dbReference type="SMR" id="Q95203"/>
<dbReference type="STRING" id="9940.ENSOARP00000012872"/>
<dbReference type="GlyCosmos" id="Q95203">
    <property type="glycosylation" value="1 site, No reported glycans"/>
</dbReference>
<dbReference type="PaxDb" id="9940-ENSOARP00000012872"/>
<dbReference type="Ensembl" id="ENSOART00215094780">
    <property type="protein sequence ID" value="ENSOARP00215051156"/>
    <property type="gene ID" value="ENSOARG00215056447"/>
</dbReference>
<dbReference type="Ensembl" id="ENSOART00220090812">
    <property type="protein sequence ID" value="ENSOARP00220048093"/>
    <property type="gene ID" value="ENSOARG00220054880"/>
</dbReference>
<dbReference type="GeneID" id="443426"/>
<dbReference type="KEGG" id="oas:443426"/>
<dbReference type="CTD" id="770"/>
<dbReference type="eggNOG" id="KOG0382">
    <property type="taxonomic scope" value="Eukaryota"/>
</dbReference>
<dbReference type="OrthoDB" id="5978072at2759"/>
<dbReference type="Proteomes" id="UP000002356">
    <property type="component" value="Unplaced"/>
</dbReference>
<dbReference type="GO" id="GO:0016323">
    <property type="term" value="C:basolateral plasma membrane"/>
    <property type="evidence" value="ECO:0007669"/>
    <property type="project" value="Ensembl"/>
</dbReference>
<dbReference type="GO" id="GO:0005576">
    <property type="term" value="C:extracellular region"/>
    <property type="evidence" value="ECO:0007669"/>
    <property type="project" value="UniProtKB-SubCell"/>
</dbReference>
<dbReference type="GO" id="GO:0016836">
    <property type="term" value="F:hydro-lyase activity"/>
    <property type="evidence" value="ECO:0007669"/>
    <property type="project" value="TreeGrafter"/>
</dbReference>
<dbReference type="GO" id="GO:0008270">
    <property type="term" value="F:zinc ion binding"/>
    <property type="evidence" value="ECO:0007669"/>
    <property type="project" value="InterPro"/>
</dbReference>
<dbReference type="GO" id="GO:0006730">
    <property type="term" value="P:one-carbon metabolic process"/>
    <property type="evidence" value="ECO:0007669"/>
    <property type="project" value="TreeGrafter"/>
</dbReference>
<dbReference type="CDD" id="cd03121">
    <property type="entry name" value="alpha_CARP_X_XI_like"/>
    <property type="match status" value="1"/>
</dbReference>
<dbReference type="FunFam" id="3.10.200.10:FF:000002">
    <property type="entry name" value="Carbonic anhydrase-related protein 10"/>
    <property type="match status" value="1"/>
</dbReference>
<dbReference type="Gene3D" id="3.10.200.10">
    <property type="entry name" value="Alpha carbonic anhydrase"/>
    <property type="match status" value="1"/>
</dbReference>
<dbReference type="InterPro" id="IPR041878">
    <property type="entry name" value="Alpha_CARP_X/XI"/>
</dbReference>
<dbReference type="InterPro" id="IPR001148">
    <property type="entry name" value="CA_dom"/>
</dbReference>
<dbReference type="InterPro" id="IPR036398">
    <property type="entry name" value="CA_dom_sf"/>
</dbReference>
<dbReference type="InterPro" id="IPR023561">
    <property type="entry name" value="Carbonic_anhydrase_a-class"/>
</dbReference>
<dbReference type="PANTHER" id="PTHR18952">
    <property type="entry name" value="CARBONIC ANHYDRASE"/>
    <property type="match status" value="1"/>
</dbReference>
<dbReference type="PANTHER" id="PTHR18952:SF93">
    <property type="entry name" value="CARBONIC ANHYDRASE-RELATED PROTEIN 11"/>
    <property type="match status" value="1"/>
</dbReference>
<dbReference type="Pfam" id="PF00194">
    <property type="entry name" value="Carb_anhydrase"/>
    <property type="match status" value="1"/>
</dbReference>
<dbReference type="SMART" id="SM01057">
    <property type="entry name" value="Carb_anhydrase"/>
    <property type="match status" value="1"/>
</dbReference>
<dbReference type="SUPFAM" id="SSF51069">
    <property type="entry name" value="Carbonic anhydrase"/>
    <property type="match status" value="1"/>
</dbReference>
<dbReference type="PROSITE" id="PS51144">
    <property type="entry name" value="ALPHA_CA_2"/>
    <property type="match status" value="1"/>
</dbReference>
<sequence>MGAAPRLSAPRVLVLWAALGAAAHIGPAPDPEDWWSYKDNLQGNFVPGPPFWGLVNAAWSLCAVGKRQSPVDVDLKRVLYDPFLPPLRLSTGGEKLRGTLYNTGRHVSFLPAPRPVVNVSGGPLLYSHRLSELRLLFGARDGAGSEHQINHQGFSAEVQLIHFNQELYGNLSAATRGPNGLAILSLFVNVAGSSNPFLSRLLNRDTITRISYKNDAYFLQDLSLELLFPESFGFITYQGSLSTPPCSETVTWILIDRALNITSLQMHSLRLLSQNPPSQIFQSLSGNGRPLQPLAHRALRGNRDPRHPERRCRGPNYRLHVDDVPHGL</sequence>
<accession>Q95203</accession>
<gene>
    <name type="primary">CA11</name>
    <name type="synonym">CARP2</name>
</gene>
<organism>
    <name type="scientific">Ovis aries</name>
    <name type="common">Sheep</name>
    <dbReference type="NCBI Taxonomy" id="9940"/>
    <lineage>
        <taxon>Eukaryota</taxon>
        <taxon>Metazoa</taxon>
        <taxon>Chordata</taxon>
        <taxon>Craniata</taxon>
        <taxon>Vertebrata</taxon>
        <taxon>Euteleostomi</taxon>
        <taxon>Mammalia</taxon>
        <taxon>Eutheria</taxon>
        <taxon>Laurasiatheria</taxon>
        <taxon>Artiodactyla</taxon>
        <taxon>Ruminantia</taxon>
        <taxon>Pecora</taxon>
        <taxon>Bovidae</taxon>
        <taxon>Caprinae</taxon>
        <taxon>Ovis</taxon>
    </lineage>
</organism>
<feature type="signal peptide" evidence="1">
    <location>
        <begin position="1"/>
        <end position="23"/>
    </location>
</feature>
<feature type="chain" id="PRO_0000004247" description="Carbonic anhydrase-related protein 11">
    <location>
        <begin position="24"/>
        <end position="328"/>
    </location>
</feature>
<feature type="domain" description="Alpha-carbonic anhydrase" evidence="2">
    <location>
        <begin position="33"/>
        <end position="303"/>
    </location>
</feature>
<feature type="region of interest" description="Disordered" evidence="3">
    <location>
        <begin position="300"/>
        <end position="328"/>
    </location>
</feature>
<feature type="compositionally biased region" description="Basic and acidic residues" evidence="3">
    <location>
        <begin position="319"/>
        <end position="328"/>
    </location>
</feature>
<feature type="glycosylation site" description="N-linked (GlcNAc...) asparagine" evidence="1">
    <location>
        <position position="118"/>
    </location>
</feature>
<reference key="1">
    <citation type="journal article" date="1998" name="Genomics">
        <title>Evolutionarily conserved, 'acatalytic' carbonic anhydrase-related protein XI contains a sequence motif present in the neuropeptide sauvagine: the human CA-RP XI gene (CA11) is embedded between the secretor gene cluster and the DBP gene at 19q13.3.</title>
        <authorList>
            <person name="Lovejoy D.A."/>
            <person name="Hewett-Emmett D."/>
            <person name="Porter C.A."/>
            <person name="Cepoi D."/>
            <person name="Sheffield A."/>
            <person name="Vale W.W."/>
            <person name="Tashian R.E."/>
        </authorList>
    </citation>
    <scope>NUCLEOTIDE SEQUENCE [MRNA]</scope>
    <source>
        <tissue>Brain</tissue>
    </source>
</reference>
<protein>
    <recommendedName>
        <fullName>Carbonic anhydrase-related protein 11</fullName>
    </recommendedName>
    <alternativeName>
        <fullName>CA-RP XI</fullName>
        <shortName>CA-XI</shortName>
        <shortName>CARP XI</shortName>
    </alternativeName>
    <alternativeName>
        <fullName>Carbonic anhydrase-related protein 2</fullName>
        <shortName>CA-RP II</shortName>
        <shortName>CARP-2</shortName>
    </alternativeName>
</protein>
<name>CAH11_SHEEP</name>
<keyword id="KW-0325">Glycoprotein</keyword>
<keyword id="KW-1185">Reference proteome</keyword>
<keyword id="KW-0964">Secreted</keyword>
<keyword id="KW-0732">Signal</keyword>